<feature type="signal peptide" evidence="3">
    <location>
        <begin position="1"/>
        <end position="29"/>
    </location>
</feature>
<feature type="chain" id="PRO_0000012915" description="Cadherin EGF LAG seven-pass G-type receptor 1">
    <location>
        <begin position="30"/>
        <end position="3034"/>
    </location>
</feature>
<feature type="topological domain" description="Extracellular" evidence="3">
    <location>
        <begin position="30"/>
        <end position="2484"/>
    </location>
</feature>
<feature type="transmembrane region" description="Helical; Name=1" evidence="3">
    <location>
        <begin position="2485"/>
        <end position="2505"/>
    </location>
</feature>
<feature type="topological domain" description="Cytoplasmic" evidence="3">
    <location>
        <begin position="2506"/>
        <end position="2516"/>
    </location>
</feature>
<feature type="transmembrane region" description="Helical; Name=2" evidence="3">
    <location>
        <begin position="2517"/>
        <end position="2537"/>
    </location>
</feature>
<feature type="topological domain" description="Extracellular" evidence="3">
    <location>
        <begin position="2538"/>
        <end position="2542"/>
    </location>
</feature>
<feature type="transmembrane region" description="Helical; Name=3" evidence="3">
    <location>
        <begin position="2543"/>
        <end position="2563"/>
    </location>
</feature>
<feature type="topological domain" description="Cytoplasmic" evidence="3">
    <location>
        <begin position="2564"/>
        <end position="2587"/>
    </location>
</feature>
<feature type="transmembrane region" description="Helical; Name=4" evidence="3">
    <location>
        <begin position="2588"/>
        <end position="2608"/>
    </location>
</feature>
<feature type="topological domain" description="Extracellular" evidence="3">
    <location>
        <begin position="2609"/>
        <end position="2625"/>
    </location>
</feature>
<feature type="transmembrane region" description="Helical; Name=5" evidence="3">
    <location>
        <begin position="2626"/>
        <end position="2646"/>
    </location>
</feature>
<feature type="topological domain" description="Cytoplasmic" evidence="3">
    <location>
        <begin position="2647"/>
        <end position="2670"/>
    </location>
</feature>
<feature type="transmembrane region" description="Helical; Name=6" evidence="3">
    <location>
        <begin position="2671"/>
        <end position="2691"/>
    </location>
</feature>
<feature type="topological domain" description="Extracellular" evidence="3">
    <location>
        <begin position="2692"/>
        <end position="2694"/>
    </location>
</feature>
<feature type="transmembrane region" description="Helical; Name=7" evidence="3">
    <location>
        <begin position="2695"/>
        <end position="2715"/>
    </location>
</feature>
<feature type="topological domain" description="Cytoplasmic" evidence="3">
    <location>
        <begin position="2716"/>
        <end position="3034"/>
    </location>
</feature>
<feature type="domain" description="Cadherin 1" evidence="4">
    <location>
        <begin position="261"/>
        <end position="368"/>
    </location>
</feature>
<feature type="domain" description="Cadherin 2" evidence="4">
    <location>
        <begin position="369"/>
        <end position="474"/>
    </location>
</feature>
<feature type="domain" description="Cadherin 3" evidence="4">
    <location>
        <begin position="475"/>
        <end position="580"/>
    </location>
</feature>
<feature type="domain" description="Cadherin 4" evidence="4">
    <location>
        <begin position="581"/>
        <end position="702"/>
    </location>
</feature>
<feature type="domain" description="Cadherin 5" evidence="4">
    <location>
        <begin position="703"/>
        <end position="804"/>
    </location>
</feature>
<feature type="domain" description="Cadherin 6" evidence="4">
    <location>
        <begin position="805"/>
        <end position="907"/>
    </location>
</feature>
<feature type="domain" description="Cadherin 7" evidence="4">
    <location>
        <begin position="908"/>
        <end position="1014"/>
    </location>
</feature>
<feature type="domain" description="Cadherin 8" evidence="4">
    <location>
        <begin position="1015"/>
        <end position="1116"/>
    </location>
</feature>
<feature type="domain" description="Cadherin 9" evidence="4">
    <location>
        <begin position="1121"/>
        <end position="1239"/>
    </location>
</feature>
<feature type="domain" description="EGF-like 1; calcium-binding" evidence="5">
    <location>
        <begin position="1318"/>
        <end position="1376"/>
    </location>
</feature>
<feature type="domain" description="EGF-like 2; calcium-binding" evidence="5">
    <location>
        <begin position="1378"/>
        <end position="1414"/>
    </location>
</feature>
<feature type="domain" description="EGF-like 3; calcium-binding" evidence="5">
    <location>
        <begin position="1418"/>
        <end position="1456"/>
    </location>
</feature>
<feature type="domain" description="Laminin G-like 1" evidence="7">
    <location>
        <begin position="1457"/>
        <end position="1661"/>
    </location>
</feature>
<feature type="domain" description="EGF-like 4; calcium-binding" evidence="5">
    <location>
        <begin position="1664"/>
        <end position="1700"/>
    </location>
</feature>
<feature type="domain" description="Laminin G-like 2" evidence="7">
    <location>
        <begin position="1704"/>
        <end position="1885"/>
    </location>
</feature>
<feature type="domain" description="EGF-like 5; calcium-binding" evidence="5">
    <location>
        <begin position="1887"/>
        <end position="1922"/>
    </location>
</feature>
<feature type="domain" description="EGF-like 6; calcium-binding" evidence="5">
    <location>
        <begin position="1923"/>
        <end position="1961"/>
    </location>
</feature>
<feature type="domain" description="EGF-like 7; calcium-binding" evidence="5">
    <location>
        <begin position="1962"/>
        <end position="1994"/>
    </location>
</feature>
<feature type="domain" description="EGF-like 8; calcium-binding" evidence="5">
    <location>
        <begin position="1996"/>
        <end position="2031"/>
    </location>
</feature>
<feature type="domain" description="Laminin EGF-like" evidence="8">
    <location>
        <begin position="2018"/>
        <end position="2065"/>
    </location>
</feature>
<feature type="domain" description="GAIN-B" evidence="6">
    <location>
        <begin position="2312"/>
        <end position="2476"/>
    </location>
</feature>
<feature type="region of interest" description="Disordered" evidence="9">
    <location>
        <begin position="222"/>
        <end position="267"/>
    </location>
</feature>
<feature type="region of interest" description="Disordered" evidence="9">
    <location>
        <begin position="2295"/>
        <end position="2346"/>
    </location>
</feature>
<feature type="region of interest" description="GPS" evidence="6">
    <location>
        <begin position="2426"/>
        <end position="2476"/>
    </location>
</feature>
<feature type="region of interest" description="Disordered" evidence="9">
    <location>
        <begin position="2774"/>
        <end position="3034"/>
    </location>
</feature>
<feature type="compositionally biased region" description="Low complexity" evidence="9">
    <location>
        <begin position="222"/>
        <end position="243"/>
    </location>
</feature>
<feature type="compositionally biased region" description="Basic and acidic residues" evidence="9">
    <location>
        <begin position="2893"/>
        <end position="2909"/>
    </location>
</feature>
<feature type="compositionally biased region" description="Low complexity" evidence="9">
    <location>
        <begin position="2976"/>
        <end position="2986"/>
    </location>
</feature>
<feature type="compositionally biased region" description="Basic and acidic residues" evidence="9">
    <location>
        <begin position="3003"/>
        <end position="3012"/>
    </location>
</feature>
<feature type="compositionally biased region" description="Polar residues" evidence="9">
    <location>
        <begin position="3020"/>
        <end position="3034"/>
    </location>
</feature>
<feature type="modified residue" description="(3R)-3-hydroxyasparagine" evidence="3">
    <location>
        <position position="1681"/>
    </location>
</feature>
<feature type="modified residue" description="(3R)-3-hydroxyaspartate" evidence="3">
    <location>
        <position position="1904"/>
    </location>
</feature>
<feature type="modified residue" description="Phosphoserine" evidence="13">
    <location>
        <position position="2776"/>
    </location>
</feature>
<feature type="modified residue" description="Phosphoserine" evidence="2">
    <location>
        <position position="2779"/>
    </location>
</feature>
<feature type="modified residue" description="Phosphoserine" evidence="13">
    <location>
        <position position="2886"/>
    </location>
</feature>
<feature type="modified residue" description="Phosphoserine" evidence="13">
    <location>
        <position position="2888"/>
    </location>
</feature>
<feature type="glycosylation site" description="N-linked (GlcNAc...) asparagine" evidence="3">
    <location>
        <position position="236"/>
    </location>
</feature>
<feature type="glycosylation site" description="N-linked (GlcNAc...) asparagine" evidence="3">
    <location>
        <position position="561"/>
    </location>
</feature>
<feature type="glycosylation site" description="N-linked (GlcNAc...) asparagine" evidence="3">
    <location>
        <position position="649"/>
    </location>
</feature>
<feature type="glycosylation site" description="N-linked (GlcNAc...) asparagine" evidence="3">
    <location>
        <position position="793"/>
    </location>
</feature>
<feature type="glycosylation site" description="N-linked (GlcNAc...) asparagine" evidence="3">
    <location>
        <position position="1129"/>
    </location>
</feature>
<feature type="glycosylation site" description="N-linked (GlcNAc...) asparagine" evidence="3">
    <location>
        <position position="1154"/>
    </location>
</feature>
<feature type="glycosylation site" description="N-linked (GlcNAc...) asparagine" evidence="3">
    <location>
        <position position="1228"/>
    </location>
</feature>
<feature type="glycosylation site" description="N-linked (GlcNAc...) asparagine" evidence="3">
    <location>
        <position position="1264"/>
    </location>
</feature>
<feature type="glycosylation site" description="N-linked (GlcNAc...) asparagine" evidence="3">
    <location>
        <position position="1274"/>
    </location>
</feature>
<feature type="glycosylation site" description="N-linked (GlcNAc...) asparagine" evidence="3">
    <location>
        <position position="1302"/>
    </location>
</feature>
<feature type="glycosylation site" description="N-linked (GlcNAc...) asparagine" evidence="3">
    <location>
        <position position="1591"/>
    </location>
</feature>
<feature type="glycosylation site" description="N-linked (GlcNAc...) asparagine" evidence="3">
    <location>
        <position position="1638"/>
    </location>
</feature>
<feature type="glycosylation site" description="N-linked (GlcNAc...) asparagine" evidence="3">
    <location>
        <position position="1655"/>
    </location>
</feature>
<feature type="glycosylation site" description="N-linked (GlcNAc...) asparagine" evidence="3">
    <location>
        <position position="1994"/>
    </location>
</feature>
<feature type="glycosylation site" description="N-linked (GlcNAc...) asparagine" evidence="3">
    <location>
        <position position="2118"/>
    </location>
</feature>
<feature type="glycosylation site" description="N-linked (GlcNAc...) asparagine" evidence="3">
    <location>
        <position position="2137"/>
    </location>
</feature>
<feature type="glycosylation site" description="N-linked (GlcNAc...) asparagine" evidence="3">
    <location>
        <position position="2144"/>
    </location>
</feature>
<feature type="glycosylation site" description="N-linked (GlcNAc...) asparagine" evidence="3">
    <location>
        <position position="2155"/>
    </location>
</feature>
<feature type="glycosylation site" description="N-linked (GlcNAc...) asparagine" evidence="3">
    <location>
        <position position="2160"/>
    </location>
</feature>
<feature type="glycosylation site" description="N-linked (GlcNAc...) asparagine" evidence="3">
    <location>
        <position position="2272"/>
    </location>
</feature>
<feature type="glycosylation site" description="N-linked (GlcNAc...) asparagine" evidence="3">
    <location>
        <position position="2430"/>
    </location>
</feature>
<feature type="glycosylation site" description="N-linked (GlcNAc...) asparagine" evidence="3">
    <location>
        <position position="2452"/>
    </location>
</feature>
<feature type="glycosylation site" description="N-linked (GlcNAc...) asparagine" evidence="3">
    <location>
        <position position="2538"/>
    </location>
</feature>
<feature type="disulfide bond" evidence="1">
    <location>
        <begin position="1322"/>
        <end position="1333"/>
    </location>
</feature>
<feature type="disulfide bond" evidence="1">
    <location>
        <begin position="1327"/>
        <end position="1364"/>
    </location>
</feature>
<feature type="disulfide bond" evidence="1">
    <location>
        <begin position="1366"/>
        <end position="1375"/>
    </location>
</feature>
<feature type="disulfide bond" evidence="1">
    <location>
        <begin position="1382"/>
        <end position="1393"/>
    </location>
</feature>
<feature type="disulfide bond" evidence="1">
    <location>
        <begin position="1387"/>
        <end position="1402"/>
    </location>
</feature>
<feature type="disulfide bond" evidence="1">
    <location>
        <begin position="1404"/>
        <end position="1413"/>
    </location>
</feature>
<feature type="disulfide bond" evidence="1">
    <location>
        <begin position="1422"/>
        <end position="1433"/>
    </location>
</feature>
<feature type="disulfide bond" evidence="1">
    <location>
        <begin position="1427"/>
        <end position="1443"/>
    </location>
</feature>
<feature type="disulfide bond" evidence="1">
    <location>
        <begin position="1445"/>
        <end position="1455"/>
    </location>
</feature>
<feature type="disulfide bond" evidence="1">
    <location>
        <begin position="1635"/>
        <end position="1661"/>
    </location>
</feature>
<feature type="disulfide bond" evidence="1">
    <location>
        <begin position="1668"/>
        <end position="1679"/>
    </location>
</feature>
<feature type="disulfide bond" evidence="1">
    <location>
        <begin position="1673"/>
        <end position="1688"/>
    </location>
</feature>
<feature type="disulfide bond" evidence="1">
    <location>
        <begin position="1690"/>
        <end position="1699"/>
    </location>
</feature>
<feature type="disulfide bond" evidence="1">
    <location>
        <begin position="1855"/>
        <end position="1885"/>
    </location>
</feature>
<feature type="disulfide bond" evidence="1">
    <location>
        <begin position="1891"/>
        <end position="1902"/>
    </location>
</feature>
<feature type="disulfide bond" evidence="1">
    <location>
        <begin position="1896"/>
        <end position="1911"/>
    </location>
</feature>
<feature type="disulfide bond" evidence="1">
    <location>
        <begin position="1913"/>
        <end position="1922"/>
    </location>
</feature>
<feature type="disulfide bond" evidence="1">
    <location>
        <begin position="1926"/>
        <end position="1937"/>
    </location>
</feature>
<feature type="disulfide bond" evidence="1">
    <location>
        <begin position="1931"/>
        <end position="1949"/>
    </location>
</feature>
<feature type="disulfide bond" evidence="1">
    <location>
        <begin position="1951"/>
        <end position="1960"/>
    </location>
</feature>
<feature type="disulfide bond" evidence="1">
    <location>
        <begin position="1968"/>
        <end position="1981"/>
    </location>
</feature>
<feature type="disulfide bond" evidence="1">
    <location>
        <begin position="1983"/>
        <end position="1993"/>
    </location>
</feature>
<feature type="disulfide bond" evidence="1">
    <location>
        <begin position="2000"/>
        <end position="2015"/>
    </location>
</feature>
<feature type="disulfide bond" evidence="1">
    <location>
        <begin position="2002"/>
        <end position="2018"/>
    </location>
</feature>
<feature type="disulfide bond" evidence="1">
    <location>
        <begin position="2020"/>
        <end position="2030"/>
    </location>
</feature>
<feature type="disulfide bond" evidence="1">
    <location>
        <begin position="2039"/>
        <end position="2048"/>
    </location>
</feature>
<feature type="disulfide bond" evidence="1">
    <location>
        <begin position="2051"/>
        <end position="2063"/>
    </location>
</feature>
<feature type="disulfide bond" evidence="6">
    <location>
        <begin position="2426"/>
        <end position="2458"/>
    </location>
</feature>
<feature type="disulfide bond" evidence="6">
    <location>
        <begin position="2446"/>
        <end position="2460"/>
    </location>
</feature>
<feature type="sequence conflict" description="In Ref. 1; AAC68836." evidence="12" ref="1">
    <original>E</original>
    <variation>Q</variation>
    <location>
        <position position="218"/>
    </location>
</feature>
<feature type="sequence conflict" description="In Ref. 1; AAC68836." evidence="12" ref="1">
    <original>M</original>
    <variation>I</variation>
    <location>
        <position position="1050"/>
    </location>
</feature>
<feature type="sequence conflict" description="In Ref. 1; AAC68836." evidence="12" ref="1">
    <original>SH</original>
    <variation>RP</variation>
    <location>
        <begin position="1900"/>
        <end position="1901"/>
    </location>
</feature>
<feature type="sequence conflict" description="In Ref. 1; AAC68836." evidence="12" ref="1">
    <original>T</original>
    <variation>A</variation>
    <location>
        <position position="2524"/>
    </location>
</feature>
<feature type="sequence conflict" description="In Ref. 1; AAC68836." evidence="12" ref="1">
    <original>A</original>
    <variation>T</variation>
    <location>
        <position position="2805"/>
    </location>
</feature>
<protein>
    <recommendedName>
        <fullName>Cadherin EGF LAG seven-pass G-type receptor 1</fullName>
    </recommendedName>
</protein>
<dbReference type="EMBL" id="AF031572">
    <property type="protein sequence ID" value="AAC68836.1"/>
    <property type="molecule type" value="mRNA"/>
</dbReference>
<dbReference type="EMBL" id="AC116764">
    <property type="status" value="NOT_ANNOTATED_CDS"/>
    <property type="molecule type" value="Genomic_DNA"/>
</dbReference>
<dbReference type="EMBL" id="AC139513">
    <property type="status" value="NOT_ANNOTATED_CDS"/>
    <property type="molecule type" value="Genomic_DNA"/>
</dbReference>
<dbReference type="CCDS" id="CCDS37172.1"/>
<dbReference type="PIR" id="T14119">
    <property type="entry name" value="T14119"/>
</dbReference>
<dbReference type="RefSeq" id="NP_034016.2">
    <property type="nucleotide sequence ID" value="NM_009886.2"/>
</dbReference>
<dbReference type="SMR" id="O35161"/>
<dbReference type="BioGRID" id="198673">
    <property type="interactions" value="1"/>
</dbReference>
<dbReference type="FunCoup" id="O35161">
    <property type="interactions" value="369"/>
</dbReference>
<dbReference type="IntAct" id="O35161">
    <property type="interactions" value="1"/>
</dbReference>
<dbReference type="MINT" id="O35161"/>
<dbReference type="STRING" id="10090.ENSMUSP00000016172"/>
<dbReference type="GlyCosmos" id="O35161">
    <property type="glycosylation" value="23 sites, No reported glycans"/>
</dbReference>
<dbReference type="GlyGen" id="O35161">
    <property type="glycosylation" value="30 sites, 3 N-linked glycans (5 sites), 1 O-linked glycan (5 sites)"/>
</dbReference>
<dbReference type="iPTMnet" id="O35161"/>
<dbReference type="PhosphoSitePlus" id="O35161"/>
<dbReference type="PaxDb" id="10090-ENSMUSP00000016172"/>
<dbReference type="PeptideAtlas" id="O35161"/>
<dbReference type="ProteomicsDB" id="281530"/>
<dbReference type="Antibodypedia" id="13897">
    <property type="antibodies" value="183 antibodies from 30 providers"/>
</dbReference>
<dbReference type="DNASU" id="12614"/>
<dbReference type="Ensembl" id="ENSMUST00000016172.10">
    <property type="protein sequence ID" value="ENSMUSP00000016172.8"/>
    <property type="gene ID" value="ENSMUSG00000016028.12"/>
</dbReference>
<dbReference type="GeneID" id="12614"/>
<dbReference type="KEGG" id="mmu:12614"/>
<dbReference type="UCSC" id="uc007xdt.1">
    <property type="organism name" value="mouse"/>
</dbReference>
<dbReference type="AGR" id="MGI:1100883"/>
<dbReference type="CTD" id="9620"/>
<dbReference type="MGI" id="MGI:1100883">
    <property type="gene designation" value="Celsr1"/>
</dbReference>
<dbReference type="VEuPathDB" id="HostDB:ENSMUSG00000016028"/>
<dbReference type="eggNOG" id="KOG4289">
    <property type="taxonomic scope" value="Eukaryota"/>
</dbReference>
<dbReference type="GeneTree" id="ENSGT00940000159839"/>
<dbReference type="HOGENOM" id="CLU_000158_1_0_1"/>
<dbReference type="InParanoid" id="O35161"/>
<dbReference type="OMA" id="YTFLRGN"/>
<dbReference type="OrthoDB" id="26203at2759"/>
<dbReference type="PhylomeDB" id="O35161"/>
<dbReference type="TreeFam" id="TF323983"/>
<dbReference type="BioGRID-ORCS" id="12614">
    <property type="hits" value="5 hits in 81 CRISPR screens"/>
</dbReference>
<dbReference type="ChiTaRS" id="Celsr1">
    <property type="organism name" value="mouse"/>
</dbReference>
<dbReference type="PRO" id="PR:O35161"/>
<dbReference type="Proteomes" id="UP000000589">
    <property type="component" value="Chromosome 15"/>
</dbReference>
<dbReference type="RNAct" id="O35161">
    <property type="molecule type" value="protein"/>
</dbReference>
<dbReference type="Bgee" id="ENSMUSG00000016028">
    <property type="expression patterns" value="Expressed in ventricular zone and 184 other cell types or tissues"/>
</dbReference>
<dbReference type="ExpressionAtlas" id="O35161">
    <property type="expression patterns" value="baseline and differential"/>
</dbReference>
<dbReference type="GO" id="GO:0016020">
    <property type="term" value="C:membrane"/>
    <property type="evidence" value="ECO:0000314"/>
    <property type="project" value="MGI"/>
</dbReference>
<dbReference type="GO" id="GO:0005654">
    <property type="term" value="C:nucleoplasm"/>
    <property type="evidence" value="ECO:0007669"/>
    <property type="project" value="Ensembl"/>
</dbReference>
<dbReference type="GO" id="GO:0005886">
    <property type="term" value="C:plasma membrane"/>
    <property type="evidence" value="ECO:0007669"/>
    <property type="project" value="UniProtKB-SubCell"/>
</dbReference>
<dbReference type="GO" id="GO:0005509">
    <property type="term" value="F:calcium ion binding"/>
    <property type="evidence" value="ECO:0000304"/>
    <property type="project" value="UniProtKB"/>
</dbReference>
<dbReference type="GO" id="GO:0004930">
    <property type="term" value="F:G protein-coupled receptor activity"/>
    <property type="evidence" value="ECO:0007669"/>
    <property type="project" value="UniProtKB-KW"/>
</dbReference>
<dbReference type="GO" id="GO:0009952">
    <property type="term" value="P:anterior/posterior pattern specification"/>
    <property type="evidence" value="ECO:0000315"/>
    <property type="project" value="MGI"/>
</dbReference>
<dbReference type="GO" id="GO:0045176">
    <property type="term" value="P:apical protein localization"/>
    <property type="evidence" value="ECO:0000315"/>
    <property type="project" value="MGI"/>
</dbReference>
<dbReference type="GO" id="GO:0007166">
    <property type="term" value="P:cell surface receptor signaling pathway"/>
    <property type="evidence" value="ECO:0007669"/>
    <property type="project" value="InterPro"/>
</dbReference>
<dbReference type="GO" id="GO:0048105">
    <property type="term" value="P:establishment of body hair planar orientation"/>
    <property type="evidence" value="ECO:0000315"/>
    <property type="project" value="MGI"/>
</dbReference>
<dbReference type="GO" id="GO:0001736">
    <property type="term" value="P:establishment of planar polarity"/>
    <property type="evidence" value="ECO:0000315"/>
    <property type="project" value="UniProtKB"/>
</dbReference>
<dbReference type="GO" id="GO:0042249">
    <property type="term" value="P:establishment of planar polarity of embryonic epithelium"/>
    <property type="evidence" value="ECO:0000315"/>
    <property type="project" value="MGI"/>
</dbReference>
<dbReference type="GO" id="GO:0001942">
    <property type="term" value="P:hair follicle development"/>
    <property type="evidence" value="ECO:0000315"/>
    <property type="project" value="MGI"/>
</dbReference>
<dbReference type="GO" id="GO:0007156">
    <property type="term" value="P:homophilic cell adhesion via plasma membrane adhesion molecules"/>
    <property type="evidence" value="ECO:0007669"/>
    <property type="project" value="InterPro"/>
</dbReference>
<dbReference type="GO" id="GO:0042472">
    <property type="term" value="P:inner ear morphogenesis"/>
    <property type="evidence" value="ECO:0000315"/>
    <property type="project" value="MGI"/>
</dbReference>
<dbReference type="GO" id="GO:0060490">
    <property type="term" value="P:lateral sprouting involved in lung morphogenesis"/>
    <property type="evidence" value="ECO:0000315"/>
    <property type="project" value="MGI"/>
</dbReference>
<dbReference type="GO" id="GO:0007626">
    <property type="term" value="P:locomotory behavior"/>
    <property type="evidence" value="ECO:0000315"/>
    <property type="project" value="MGI"/>
</dbReference>
<dbReference type="GO" id="GO:0097475">
    <property type="term" value="P:motor neuron migration"/>
    <property type="evidence" value="ECO:0000315"/>
    <property type="project" value="MGI"/>
</dbReference>
<dbReference type="GO" id="GO:0001843">
    <property type="term" value="P:neural tube closure"/>
    <property type="evidence" value="ECO:0000315"/>
    <property type="project" value="UniProtKB"/>
</dbReference>
<dbReference type="GO" id="GO:0060488">
    <property type="term" value="P:orthogonal dichotomous subdivision of terminal units involved in lung branching morphogenesis"/>
    <property type="evidence" value="ECO:0000315"/>
    <property type="project" value="MGI"/>
</dbReference>
<dbReference type="GO" id="GO:0060489">
    <property type="term" value="P:planar dichotomous subdivision of terminal units involved in lung branching morphogenesis"/>
    <property type="evidence" value="ECO:0000315"/>
    <property type="project" value="MGI"/>
</dbReference>
<dbReference type="GO" id="GO:0090251">
    <property type="term" value="P:protein localization involved in establishment of planar polarity"/>
    <property type="evidence" value="ECO:0000314"/>
    <property type="project" value="MGI"/>
</dbReference>
<dbReference type="GO" id="GO:0032956">
    <property type="term" value="P:regulation of actin cytoskeleton organization"/>
    <property type="evidence" value="ECO:0000315"/>
    <property type="project" value="MGI"/>
</dbReference>
<dbReference type="GO" id="GO:0007266">
    <property type="term" value="P:Rho protein signal transduction"/>
    <property type="evidence" value="ECO:0000315"/>
    <property type="project" value="MGI"/>
</dbReference>
<dbReference type="GO" id="GO:0042060">
    <property type="term" value="P:wound healing"/>
    <property type="evidence" value="ECO:0000316"/>
    <property type="project" value="MGI"/>
</dbReference>
<dbReference type="CDD" id="cd15991">
    <property type="entry name" value="7tmB2_CELSR1"/>
    <property type="match status" value="1"/>
</dbReference>
<dbReference type="CDD" id="cd11304">
    <property type="entry name" value="Cadherin_repeat"/>
    <property type="match status" value="9"/>
</dbReference>
<dbReference type="CDD" id="cd00054">
    <property type="entry name" value="EGF_CA"/>
    <property type="match status" value="4"/>
</dbReference>
<dbReference type="CDD" id="cd00055">
    <property type="entry name" value="EGF_Lam"/>
    <property type="match status" value="1"/>
</dbReference>
<dbReference type="CDD" id="cd00110">
    <property type="entry name" value="LamG"/>
    <property type="match status" value="2"/>
</dbReference>
<dbReference type="FunFam" id="2.10.25.10:FF:000011">
    <property type="entry name" value="Cadherin EGF LAG seven-pass G-type receptor"/>
    <property type="match status" value="1"/>
</dbReference>
<dbReference type="FunFam" id="2.60.40.60:FF:000013">
    <property type="entry name" value="Cadherin EGF LAG seven-pass G-type receptor"/>
    <property type="match status" value="1"/>
</dbReference>
<dbReference type="FunFam" id="2.10.25.10:FF:000503">
    <property type="entry name" value="Cadherin EGF LAG seven-pass G-type receptor 1"/>
    <property type="match status" value="1"/>
</dbReference>
<dbReference type="FunFam" id="2.60.120.200:FF:000059">
    <property type="entry name" value="Cadherin EGF LAG seven-pass G-type receptor 1"/>
    <property type="match status" value="1"/>
</dbReference>
<dbReference type="FunFam" id="2.170.300.10:FF:000011">
    <property type="entry name" value="cadherin EGF LAG seven-pass G-type receptor 1"/>
    <property type="match status" value="1"/>
</dbReference>
<dbReference type="FunFam" id="1.20.1070.10:FF:000123">
    <property type="entry name" value="cadherin EGF LAG seven-pass G-type receptor 1 isoform X2"/>
    <property type="match status" value="1"/>
</dbReference>
<dbReference type="FunFam" id="2.10.25.10:FF:000047">
    <property type="entry name" value="Cadherin EGF LAG seven-pass G-type receptor 2"/>
    <property type="match status" value="1"/>
</dbReference>
<dbReference type="FunFam" id="2.10.25.10:FF:000183">
    <property type="entry name" value="Cadherin EGF LAG seven-pass G-type receptor 2"/>
    <property type="match status" value="1"/>
</dbReference>
<dbReference type="FunFam" id="2.60.120.200:FF:000020">
    <property type="entry name" value="Cadherin EGF LAG seven-pass G-type receptor 2"/>
    <property type="match status" value="1"/>
</dbReference>
<dbReference type="FunFam" id="1.25.40.610:FF:000005">
    <property type="entry name" value="cadherin EGF LAG seven-pass G-type receptor 2"/>
    <property type="match status" value="1"/>
</dbReference>
<dbReference type="FunFam" id="2.10.25.10:FF:000156">
    <property type="entry name" value="cadherin EGF LAG seven-pass G-type receptor 2"/>
    <property type="match status" value="1"/>
</dbReference>
<dbReference type="FunFam" id="2.10.25.10:FF:000089">
    <property type="entry name" value="Cadherin EGF LAG seven-pass G-type receptor 3"/>
    <property type="match status" value="1"/>
</dbReference>
<dbReference type="FunFam" id="2.60.40.60:FF:000010">
    <property type="entry name" value="Cadherin EGF LAG seven-pass G-type receptor 3"/>
    <property type="match status" value="2"/>
</dbReference>
<dbReference type="FunFam" id="2.60.40.60:FF:000023">
    <property type="entry name" value="Cadherin EGF LAG seven-pass G-type receptor 3"/>
    <property type="match status" value="2"/>
</dbReference>
<dbReference type="FunFam" id="2.60.40.60:FF:000029">
    <property type="entry name" value="Cadherin EGF LAG seven-pass G-type receptor 3"/>
    <property type="match status" value="1"/>
</dbReference>
<dbReference type="FunFam" id="2.60.40.60:FF:000038">
    <property type="entry name" value="Cadherin EGF LAG seven-pass G-type receptor 3"/>
    <property type="match status" value="1"/>
</dbReference>
<dbReference type="FunFam" id="2.60.40.60:FF:000040">
    <property type="entry name" value="cadherin EGF LAG seven-pass G-type receptor 3"/>
    <property type="match status" value="1"/>
</dbReference>
<dbReference type="FunFam" id="2.10.25.10:FF:000113">
    <property type="entry name" value="Cadherin, EGF LAG seven-pass G-type receptor 3"/>
    <property type="match status" value="1"/>
</dbReference>
<dbReference type="FunFam" id="2.60.40.60:FF:000044">
    <property type="entry name" value="Cadherin, EGF LAG seven-pass G-type receptor 3"/>
    <property type="match status" value="1"/>
</dbReference>
<dbReference type="FunFam" id="4.10.1240.10:FF:000003">
    <property type="entry name" value="Putative cadherin EGF LAG seven-pass G-type receptor 2"/>
    <property type="match status" value="1"/>
</dbReference>
<dbReference type="Gene3D" id="2.60.120.200">
    <property type="match status" value="2"/>
</dbReference>
<dbReference type="Gene3D" id="2.60.220.50">
    <property type="match status" value="1"/>
</dbReference>
<dbReference type="Gene3D" id="2.60.40.60">
    <property type="entry name" value="Cadherins"/>
    <property type="match status" value="9"/>
</dbReference>
<dbReference type="Gene3D" id="4.10.1240.10">
    <property type="entry name" value="GPCR, family 2, extracellular hormone receptor domain"/>
    <property type="match status" value="1"/>
</dbReference>
<dbReference type="Gene3D" id="2.10.25.10">
    <property type="entry name" value="Laminin"/>
    <property type="match status" value="6"/>
</dbReference>
<dbReference type="Gene3D" id="1.20.1070.10">
    <property type="entry name" value="Rhodopsin 7-helix transmembrane proteins"/>
    <property type="match status" value="1"/>
</dbReference>
<dbReference type="Gene3D" id="2.170.300.10">
    <property type="entry name" value="Tie2 ligand-binding domain superfamily"/>
    <property type="match status" value="1"/>
</dbReference>
<dbReference type="InterPro" id="IPR002126">
    <property type="entry name" value="Cadherin-like_dom"/>
</dbReference>
<dbReference type="InterPro" id="IPR015919">
    <property type="entry name" value="Cadherin-like_sf"/>
</dbReference>
<dbReference type="InterPro" id="IPR056286">
    <property type="entry name" value="Cadherin_CELSR1-3_9th"/>
</dbReference>
<dbReference type="InterPro" id="IPR020894">
    <property type="entry name" value="Cadherin_CS"/>
</dbReference>
<dbReference type="InterPro" id="IPR013320">
    <property type="entry name" value="ConA-like_dom_sf"/>
</dbReference>
<dbReference type="InterPro" id="IPR001881">
    <property type="entry name" value="EGF-like_Ca-bd_dom"/>
</dbReference>
<dbReference type="InterPro" id="IPR000742">
    <property type="entry name" value="EGF-like_dom"/>
</dbReference>
<dbReference type="InterPro" id="IPR000152">
    <property type="entry name" value="EGF-type_Asp/Asn_hydroxyl_site"/>
</dbReference>
<dbReference type="InterPro" id="IPR057244">
    <property type="entry name" value="GAIN_B"/>
</dbReference>
<dbReference type="InterPro" id="IPR032471">
    <property type="entry name" value="GAIN_dom_N"/>
</dbReference>
<dbReference type="InterPro" id="IPR046338">
    <property type="entry name" value="GAIN_dom_sf"/>
</dbReference>
<dbReference type="InterPro" id="IPR017981">
    <property type="entry name" value="GPCR_2-like_7TM"/>
</dbReference>
<dbReference type="InterPro" id="IPR036445">
    <property type="entry name" value="GPCR_2_extracell_dom_sf"/>
</dbReference>
<dbReference type="InterPro" id="IPR001879">
    <property type="entry name" value="GPCR_2_extracellular_dom"/>
</dbReference>
<dbReference type="InterPro" id="IPR000832">
    <property type="entry name" value="GPCR_2_secretin-like"/>
</dbReference>
<dbReference type="InterPro" id="IPR000203">
    <property type="entry name" value="GPS"/>
</dbReference>
<dbReference type="InterPro" id="IPR009030">
    <property type="entry name" value="Growth_fac_rcpt_cys_sf"/>
</dbReference>
<dbReference type="InterPro" id="IPR001791">
    <property type="entry name" value="Laminin_G"/>
</dbReference>
<dbReference type="InterPro" id="IPR002049">
    <property type="entry name" value="LE_dom"/>
</dbReference>
<dbReference type="PANTHER" id="PTHR24026:SF36">
    <property type="entry name" value="CADHERIN EGF LAG SEVEN-PASS G-TYPE RECEPTOR 1"/>
    <property type="match status" value="1"/>
</dbReference>
<dbReference type="PANTHER" id="PTHR24026">
    <property type="entry name" value="FAT ATYPICAL CADHERIN-RELATED"/>
    <property type="match status" value="1"/>
</dbReference>
<dbReference type="Pfam" id="PF00002">
    <property type="entry name" value="7tm_2"/>
    <property type="match status" value="1"/>
</dbReference>
<dbReference type="Pfam" id="PF00028">
    <property type="entry name" value="Cadherin"/>
    <property type="match status" value="8"/>
</dbReference>
<dbReference type="Pfam" id="PF23592">
    <property type="entry name" value="Cadherin_CELSR2_9th"/>
    <property type="match status" value="1"/>
</dbReference>
<dbReference type="Pfam" id="PF00008">
    <property type="entry name" value="EGF"/>
    <property type="match status" value="1"/>
</dbReference>
<dbReference type="Pfam" id="PF00053">
    <property type="entry name" value="EGF_laminin"/>
    <property type="match status" value="1"/>
</dbReference>
<dbReference type="Pfam" id="PF16489">
    <property type="entry name" value="GAIN"/>
    <property type="match status" value="1"/>
</dbReference>
<dbReference type="Pfam" id="PF01825">
    <property type="entry name" value="GPS"/>
    <property type="match status" value="1"/>
</dbReference>
<dbReference type="Pfam" id="PF02793">
    <property type="entry name" value="HRM"/>
    <property type="match status" value="1"/>
</dbReference>
<dbReference type="Pfam" id="PF02210">
    <property type="entry name" value="Laminin_G_2"/>
    <property type="match status" value="2"/>
</dbReference>
<dbReference type="PRINTS" id="PR00205">
    <property type="entry name" value="CADHERIN"/>
</dbReference>
<dbReference type="PRINTS" id="PR00249">
    <property type="entry name" value="GPCRSECRETIN"/>
</dbReference>
<dbReference type="SMART" id="SM00112">
    <property type="entry name" value="CA"/>
    <property type="match status" value="9"/>
</dbReference>
<dbReference type="SMART" id="SM00181">
    <property type="entry name" value="EGF"/>
    <property type="match status" value="6"/>
</dbReference>
<dbReference type="SMART" id="SM00179">
    <property type="entry name" value="EGF_CA"/>
    <property type="match status" value="5"/>
</dbReference>
<dbReference type="SMART" id="SM00180">
    <property type="entry name" value="EGF_Lam"/>
    <property type="match status" value="1"/>
</dbReference>
<dbReference type="SMART" id="SM00303">
    <property type="entry name" value="GPS"/>
    <property type="match status" value="1"/>
</dbReference>
<dbReference type="SMART" id="SM00008">
    <property type="entry name" value="HormR"/>
    <property type="match status" value="1"/>
</dbReference>
<dbReference type="SMART" id="SM00282">
    <property type="entry name" value="LamG"/>
    <property type="match status" value="2"/>
</dbReference>
<dbReference type="SUPFAM" id="SSF49313">
    <property type="entry name" value="Cadherin-like"/>
    <property type="match status" value="9"/>
</dbReference>
<dbReference type="SUPFAM" id="SSF49899">
    <property type="entry name" value="Concanavalin A-like lectins/glucanases"/>
    <property type="match status" value="2"/>
</dbReference>
<dbReference type="SUPFAM" id="SSF57196">
    <property type="entry name" value="EGF/Laminin"/>
    <property type="match status" value="3"/>
</dbReference>
<dbReference type="SUPFAM" id="SSF81321">
    <property type="entry name" value="Family A G protein-coupled receptor-like"/>
    <property type="match status" value="1"/>
</dbReference>
<dbReference type="SUPFAM" id="SSF57184">
    <property type="entry name" value="Growth factor receptor domain"/>
    <property type="match status" value="1"/>
</dbReference>
<dbReference type="PROSITE" id="PS00010">
    <property type="entry name" value="ASX_HYDROXYL"/>
    <property type="match status" value="2"/>
</dbReference>
<dbReference type="PROSITE" id="PS00232">
    <property type="entry name" value="CADHERIN_1"/>
    <property type="match status" value="7"/>
</dbReference>
<dbReference type="PROSITE" id="PS50268">
    <property type="entry name" value="CADHERIN_2"/>
    <property type="match status" value="9"/>
</dbReference>
<dbReference type="PROSITE" id="PS00022">
    <property type="entry name" value="EGF_1"/>
    <property type="match status" value="6"/>
</dbReference>
<dbReference type="PROSITE" id="PS01186">
    <property type="entry name" value="EGF_2"/>
    <property type="match status" value="2"/>
</dbReference>
<dbReference type="PROSITE" id="PS50026">
    <property type="entry name" value="EGF_3"/>
    <property type="match status" value="6"/>
</dbReference>
<dbReference type="PROSITE" id="PS01248">
    <property type="entry name" value="EGF_LAM_1"/>
    <property type="match status" value="1"/>
</dbReference>
<dbReference type="PROSITE" id="PS50027">
    <property type="entry name" value="EGF_LAM_2"/>
    <property type="match status" value="1"/>
</dbReference>
<dbReference type="PROSITE" id="PS50227">
    <property type="entry name" value="G_PROTEIN_RECEP_F2_3"/>
    <property type="match status" value="1"/>
</dbReference>
<dbReference type="PROSITE" id="PS50261">
    <property type="entry name" value="G_PROTEIN_RECEP_F2_4"/>
    <property type="match status" value="1"/>
</dbReference>
<dbReference type="PROSITE" id="PS50221">
    <property type="entry name" value="GAIN_B"/>
    <property type="match status" value="1"/>
</dbReference>
<dbReference type="PROSITE" id="PS50025">
    <property type="entry name" value="LAM_G_DOMAIN"/>
    <property type="match status" value="2"/>
</dbReference>
<gene>
    <name type="primary">Celsr1</name>
</gene>
<keyword id="KW-0106">Calcium</keyword>
<keyword id="KW-1003">Cell membrane</keyword>
<keyword id="KW-0217">Developmental protein</keyword>
<keyword id="KW-1015">Disulfide bond</keyword>
<keyword id="KW-0245">EGF-like domain</keyword>
<keyword id="KW-0297">G-protein coupled receptor</keyword>
<keyword id="KW-0325">Glycoprotein</keyword>
<keyword id="KW-0379">Hydroxylation</keyword>
<keyword id="KW-0424">Laminin EGF-like domain</keyword>
<keyword id="KW-0472">Membrane</keyword>
<keyword id="KW-0597">Phosphoprotein</keyword>
<keyword id="KW-0675">Receptor</keyword>
<keyword id="KW-1185">Reference proteome</keyword>
<keyword id="KW-0677">Repeat</keyword>
<keyword id="KW-0732">Signal</keyword>
<keyword id="KW-0807">Transducer</keyword>
<keyword id="KW-0812">Transmembrane</keyword>
<keyword id="KW-1133">Transmembrane helix</keyword>
<sequence length="3034" mass="330471">MAPSSPRVLPALVLLAAAALPALELGAAAWELRVPGGARAFALGPGWSYRLDTTRTPRELLDVSREGPAAGRRLGLGAGTLGCARLAGRLLPLQVRLVARGAPTAPSLVLRARAYGARCGVRLLRRSARGAELRSPAVRSVPGLGDALCFPAAGGGAASLTSVLEAITNFPACSCPPVAGTGCRRGPICLRPGGSAELRLVCALGRAAGAVWVELVIEATSGTPSESPSVSPSLLNLSQPRAGVVRRSRRGTGSSTSPQFPLPSYQVSVPENEPAGTAVIELRAHDPDEGDAGRLSYQMEALFDERSNGYFLIDAATGAVTTARSLDRETKDTHVLKVSAVDHGSPRRSAATYLTVTVSDTNDHSPVFEQSEYRERIRENLEVGYEVLTIRATDGDAPSNANMRYRLLEGAGGVFEIDARSGVVRTRAVVDREEAAEYQLLVEANDQGRNPGPLSASATVHIVVEDENDNYPQFSEKRYVVQVPEDVAVNTAVLRVQATDRDQGQNAAIHYSIVSGNLKGQFYLHSLSGSLDVINPLDFEAIREYTLRIKAQDGGRPPLINSSGLVSVQVLDVNDNAPIFVSSPFQAAVLENVPLGHSVLHIQAVDADAGENARLQYRLVDTASTIVGGSSVDSENPASAPDFPFQIHNSSGWITVCAELDREEVEHYSFGVEAVDHGSPAMSSSASVSITVLDVNDNDPMFTQPVYELRLNEDAAVGSSVLTLRARDRDANSVITYQLTGGNTRNRFALSSQSGGGLITLALPLDYKQERQYVLAVTASDGTRSHTAQVFINVTDANTHRPVFQSSHYTVSVSEDRPVGTSIATISATDEDTGENARITYVLEDPVPQFRIDPDTGTIYTMTELDYEDQAAYTLAITAQDNGIPQKSDTTSLEILILDANDNAPRFLRDFYQGSVFEDAPPSTSVLQVSATDRDSGPNGRLLYTFQGGDDGDGDFYIEPTSGVIRTQRRLDRENVAVYNLWALAVDRGSPNPLSASVGIQVSVLDINDNPPVFEKDELELFVEENSPVGSVVARIRANDPDEGPNAQIMYQIVEGNVPEVFQLDLLSGDLRALVELDFEVRRDYMLVVQATSAPLVSRATVHIRLLDQNDNPPELPDFQILFNNYVTNKSNSFPSGVIGRIPAHDPDLSDSLNYTFLQGNELSLLLLDPATGELQLSRDLDNNRPLEALMEVSVSDGIHSVTALCTLRVTIITDDMLTNSITVRLENMSQEKFLSPLLSLFVEGVATVLSTTKDDIFVFNIQNDTDVSSNILNVTFSALLPGGTRGRFFPSEDLQEQIYLNRTLLTTISAQRVLPFDDNICLREPCENYMKCVSVLRFDSSAPFISSTTVLFRPIHPITGLRCRCPPGFTGDYCETEIDLCYSNPCGANGRCRSREGGYTCECFEDFTGEHCQVNVRSGRCASGVCKNGGTCVNLLIGGFHCVCPPGEYEHPYCEVSTRSFPPQSFVTFRGLRQRFHFTVSLAFATQDRNALLLYNGRFNEKHDFIALEIVEEQLQLTFSAGETTTTVTPQVPGGVSDGRWHSVLVQYYNKPNIGHLGLPHGPSGEKVAVVTVDDCDAAVAVHFGSYVGNYSCAAQGTQSGSKKSLDLTGPLLLGGVPNLPEDFPVHSRQFVGCMRNLSIDGRIVDMAAFIANNGTRAGCASQRNFCDGTSCQNGGTCVNRWNTYLCECPLRFGGKNCEQAMPHPQRFTGESVVLWSDLDITISVPWYLGLMFRTRKEDGVLMEATAGTSSRLHLQILNSYIRFEVSYGPSDVASMQLSKSRITDGGWHHLLIELRSAKEGKDIKYLAVMTLDYGMDQSTVQIGNQLPGLKMRTIVIGGVTEDKVSVRHGFRGCMQGVRMGETSTNIATLNMNDALKVRVKDGCDVEDPCASSPCPPHSHCRDTWDSYSCICDRGYFGKKCVDACLLNPCKHVAACVRSPNTPRGYSCECGPGHYGQYCENKVDLPCPKGWWGNPVCGPCHCAVSQGFDPDCNKTNGQCQCKENYYKPPAQDACLPCDCFPHGSHSRACDMDTGQCACKPGVIGRQCNRCDNPFAEVTSLGCEVIYNGCPRAFEAGIWWPQTKFGQPAAVPCPKGSVGNAVRHCSGEKGWLPPELFNCTSGSFVDLKALNEKLNRNETRMDGNRSLRLAKALRNATQGNSTLFGNDVRTAYQLLARILQHESRQQGFDLAATREANFHEDVVHTGSALLAPATEASWEQIQRSEAGAAQLLRHFEAYFSNVARNVKRTYLRPFVIVTANMILAVDIFDKLNFTGAQVPRFEDIQEELPRELESSVSFPADTFKPPEKKEGPVVRLTNRRTTPLTAQPEPRAERETSSSRRRRHPDEPGQFAVALVVIYRTLGQLLPEHYDPDHRSLRLPNRPVINTPVVSAMVYSEGTPLPSSLQRPILVEFSLLETEERSKPVCVFWNHSLDTGGTGGWSAKGCELLSRNRTHVTCQCSHSASCAVLMDISRREHGEVLPLKIITYAALSLSLVALLVAFVLLSLVRTLRSNLHSIHKNLITALFFSQLIFMVGINQTENPFLCTVVAILLHYVSMGTFAWTLVENLHVYRMLTEVRNIDTGPMRFYHVVGWGIPAIVTGLAVGLDPQGYGNPDFCWLSLQDTLIWSFAGPVGTVIIINTVIFVLSAKVSCQRKHHYYERKGVVSMLRTAFLLLLLVTATWLLGLLAVNSDTLSFHYLFAAFSCLQGIFVLLFHCVAHREVRKHLRAVLAGKKLQLDDSATTRATLLTRSLNCNNTYSEGPDMLRTALGESTASLDSTTRDEGVQKLSVSSGPARGNHGEPDASFIPRNSKKAHGPDSDSDSELSLDEHSSSYASSHTSDSEDDGGEAEDKWNPAGGPAHSTPKADALANHVPAGWPDESLAGSDSEELDTEPHLKVETKVSVELHRQAQGNHCGDRPSDPESGVLAKPVAVLSSQPQEQRKGILKNKVTYPPPLPEQPLKSRLREKLADCEQSPTSSRTSSLGSGDGVHATDCVITIKTPRREPGREHLNGVAMNVRTGSAQANGSDSEKP</sequence>
<evidence type="ECO:0000250" key="1"/>
<evidence type="ECO:0000250" key="2">
    <source>
        <dbReference type="UniProtKB" id="Q9NYQ6"/>
    </source>
</evidence>
<evidence type="ECO:0000255" key="3"/>
<evidence type="ECO:0000255" key="4">
    <source>
        <dbReference type="PROSITE-ProRule" id="PRU00043"/>
    </source>
</evidence>
<evidence type="ECO:0000255" key="5">
    <source>
        <dbReference type="PROSITE-ProRule" id="PRU00076"/>
    </source>
</evidence>
<evidence type="ECO:0000255" key="6">
    <source>
        <dbReference type="PROSITE-ProRule" id="PRU00098"/>
    </source>
</evidence>
<evidence type="ECO:0000255" key="7">
    <source>
        <dbReference type="PROSITE-ProRule" id="PRU00122"/>
    </source>
</evidence>
<evidence type="ECO:0000255" key="8">
    <source>
        <dbReference type="PROSITE-ProRule" id="PRU00460"/>
    </source>
</evidence>
<evidence type="ECO:0000256" key="9">
    <source>
        <dbReference type="SAM" id="MobiDB-lite"/>
    </source>
</evidence>
<evidence type="ECO:0000269" key="10">
    <source>
    </source>
</evidence>
<evidence type="ECO:0000269" key="11">
    <source>
    </source>
</evidence>
<evidence type="ECO:0000305" key="12"/>
<evidence type="ECO:0007744" key="13">
    <source>
    </source>
</evidence>
<accession>O35161</accession>
<accession>E9QK27</accession>
<organism>
    <name type="scientific">Mus musculus</name>
    <name type="common">Mouse</name>
    <dbReference type="NCBI Taxonomy" id="10090"/>
    <lineage>
        <taxon>Eukaryota</taxon>
        <taxon>Metazoa</taxon>
        <taxon>Chordata</taxon>
        <taxon>Craniata</taxon>
        <taxon>Vertebrata</taxon>
        <taxon>Euteleostomi</taxon>
        <taxon>Mammalia</taxon>
        <taxon>Eutheria</taxon>
        <taxon>Euarchontoglires</taxon>
        <taxon>Glires</taxon>
        <taxon>Rodentia</taxon>
        <taxon>Myomorpha</taxon>
        <taxon>Muroidea</taxon>
        <taxon>Muridae</taxon>
        <taxon>Murinae</taxon>
        <taxon>Mus</taxon>
        <taxon>Mus</taxon>
    </lineage>
</organism>
<proteinExistence type="evidence at protein level"/>
<reference key="1">
    <citation type="journal article" date="1998" name="Mech. Dev.">
        <title>mCelsr1 is an evolutionarily conserved seven-pass transmembrane receptor and is expressed during mouse embryonic development.</title>
        <authorList>
            <person name="Hadjantonakis A.-K."/>
            <person name="Formstone C.J."/>
            <person name="Little P.F.R."/>
        </authorList>
    </citation>
    <scope>NUCLEOTIDE SEQUENCE [MRNA]</scope>
</reference>
<reference key="2">
    <citation type="journal article" date="2009" name="PLoS Biol.">
        <title>Lineage-specific biology revealed by a finished genome assembly of the mouse.</title>
        <authorList>
            <person name="Church D.M."/>
            <person name="Goodstadt L."/>
            <person name="Hillier L.W."/>
            <person name="Zody M.C."/>
            <person name="Goldstein S."/>
            <person name="She X."/>
            <person name="Bult C.J."/>
            <person name="Agarwala R."/>
            <person name="Cherry J.L."/>
            <person name="DiCuccio M."/>
            <person name="Hlavina W."/>
            <person name="Kapustin Y."/>
            <person name="Meric P."/>
            <person name="Maglott D."/>
            <person name="Birtle Z."/>
            <person name="Marques A.C."/>
            <person name="Graves T."/>
            <person name="Zhou S."/>
            <person name="Teague B."/>
            <person name="Potamousis K."/>
            <person name="Churas C."/>
            <person name="Place M."/>
            <person name="Herschleb J."/>
            <person name="Runnheim R."/>
            <person name="Forrest D."/>
            <person name="Amos-Landgraf J."/>
            <person name="Schwartz D.C."/>
            <person name="Cheng Z."/>
            <person name="Lindblad-Toh K."/>
            <person name="Eichler E.E."/>
            <person name="Ponting C.P."/>
        </authorList>
    </citation>
    <scope>NUCLEOTIDE SEQUENCE [LARGE SCALE GENOMIC DNA]</scope>
    <source>
        <strain>C57BL/6J</strain>
    </source>
</reference>
<reference key="3">
    <citation type="journal article" date="1997" name="Genomics">
        <title>Celsr1, a neural-specific gene encoding an unusual seven-pass transmembrane receptor, maps to mouse chromosome 15 and human chromosome 22qter.</title>
        <authorList>
            <person name="Hadjantonakis A.-K."/>
            <person name="Sheward W.J."/>
            <person name="Harmar A.J."/>
            <person name="de Galan L."/>
            <person name="Hoovers J.M.N."/>
            <person name="Little P.F.R."/>
        </authorList>
    </citation>
    <scope>TISSUE SPECIFICITY</scope>
    <source>
        <strain>C57BL/6J</strain>
        <tissue>Brain</tissue>
    </source>
</reference>
<reference key="4">
    <citation type="journal article" date="2002" name="Mech. Dev.">
        <title>Developmental expression profiles of Celsr (Flamingo) genes in the mouse.</title>
        <authorList>
            <person name="Tissir F."/>
            <person name="De-Backer O."/>
            <person name="Goffinet A.M."/>
            <person name="Lambert de Rouvroit C.A."/>
        </authorList>
    </citation>
    <scope>DEVELOPMENTAL STAGE</scope>
</reference>
<reference key="5">
    <citation type="journal article" date="2010" name="Cell">
        <title>A tissue-specific atlas of mouse protein phosphorylation and expression.</title>
        <authorList>
            <person name="Huttlin E.L."/>
            <person name="Jedrychowski M.P."/>
            <person name="Elias J.E."/>
            <person name="Goswami T."/>
            <person name="Rad R."/>
            <person name="Beausoleil S.A."/>
            <person name="Villen J."/>
            <person name="Haas W."/>
            <person name="Sowa M.E."/>
            <person name="Gygi S.P."/>
        </authorList>
    </citation>
    <scope>PHOSPHORYLATION [LARGE SCALE ANALYSIS] AT SER-2776; SER-2886 AND SER-2888</scope>
    <scope>IDENTIFICATION BY MASS SPECTROMETRY [LARGE SCALE ANALYSIS]</scope>
    <source>
        <tissue>Kidney</tissue>
    </source>
</reference>
<name>CELR1_MOUSE</name>
<comment type="function">
    <text>Receptor that may have an important role in cell/cell signaling during nervous system formation.</text>
</comment>
<comment type="interaction">
    <interactant intactId="EBI-8294650">
        <id>O35161</id>
    </interactant>
    <interactant intactId="EBI-8294706">
        <id>Q7T0S3</id>
        <label>atp6ap2.S</label>
    </interactant>
    <organismsDiffer>true</organismsDiffer>
    <experiments>2</experiments>
</comment>
<comment type="subcellular location">
    <subcellularLocation>
        <location>Cell membrane</location>
        <topology>Multi-pass membrane protein</topology>
    </subcellularLocation>
</comment>
<comment type="tissue specificity">
    <text evidence="11">Expressed in the brain, where it is localized principally in the ependymal cell layer, choroid plexus and the area postrema. Also found in spinal cord and in the eye.</text>
</comment>
<comment type="developmental stage">
    <text evidence="10">First detected at 6 dpc. Predominantly expressed in the developing CNS, the emerging dorsal root ganglia and cranial ganglia. In the CNS, expression is uniform along the rostrocaudal axis. During gastrulation, it is expressed in the vicinity of the primitive streak, and becomes predominant in that area at late gastrulation. At 10 dpc, detected in ventricular zones (VZ), but not in marginal zones (MZ), and weakly in other structures. Between 12 dpc and 15 dpc, a high expression is present in the VZ in all brain areas. No expression in differentiated neuronal fields. In the newborn and postnatal stages, expression remains restricted to the VZ. Also found weakly in fetal lungs, kidney and epithelia.</text>
</comment>
<comment type="PTM">
    <text evidence="1">The iron and 2-oxoglutarate dependent 3-hydroxylation of aspartate and asparagine is (R) stereospecific within EGF domains.</text>
</comment>
<comment type="similarity">
    <text evidence="12">Belongs to the G-protein coupled receptor 2 family. LN-TM7 subfamily.</text>
</comment>